<keyword id="KW-0687">Ribonucleoprotein</keyword>
<keyword id="KW-0689">Ribosomal protein</keyword>
<keyword id="KW-0694">RNA-binding</keyword>
<keyword id="KW-0699">rRNA-binding</keyword>
<keyword id="KW-0820">tRNA-binding</keyword>
<dbReference type="EMBL" id="CP001661">
    <property type="protein sequence ID" value="ACT19357.1"/>
    <property type="molecule type" value="Genomic_DNA"/>
</dbReference>
<dbReference type="SMR" id="C6E4R1"/>
<dbReference type="STRING" id="443144.GM21_3332"/>
<dbReference type="KEGG" id="gem:GM21_3332"/>
<dbReference type="eggNOG" id="COG0049">
    <property type="taxonomic scope" value="Bacteria"/>
</dbReference>
<dbReference type="HOGENOM" id="CLU_072226_1_1_7"/>
<dbReference type="OrthoDB" id="9807653at2"/>
<dbReference type="GO" id="GO:0015935">
    <property type="term" value="C:small ribosomal subunit"/>
    <property type="evidence" value="ECO:0007669"/>
    <property type="project" value="InterPro"/>
</dbReference>
<dbReference type="GO" id="GO:0019843">
    <property type="term" value="F:rRNA binding"/>
    <property type="evidence" value="ECO:0007669"/>
    <property type="project" value="UniProtKB-UniRule"/>
</dbReference>
<dbReference type="GO" id="GO:0003735">
    <property type="term" value="F:structural constituent of ribosome"/>
    <property type="evidence" value="ECO:0007669"/>
    <property type="project" value="InterPro"/>
</dbReference>
<dbReference type="GO" id="GO:0000049">
    <property type="term" value="F:tRNA binding"/>
    <property type="evidence" value="ECO:0007669"/>
    <property type="project" value="UniProtKB-UniRule"/>
</dbReference>
<dbReference type="GO" id="GO:0006412">
    <property type="term" value="P:translation"/>
    <property type="evidence" value="ECO:0007669"/>
    <property type="project" value="UniProtKB-UniRule"/>
</dbReference>
<dbReference type="CDD" id="cd14869">
    <property type="entry name" value="uS7_Bacteria"/>
    <property type="match status" value="1"/>
</dbReference>
<dbReference type="FunFam" id="1.10.455.10:FF:000001">
    <property type="entry name" value="30S ribosomal protein S7"/>
    <property type="match status" value="1"/>
</dbReference>
<dbReference type="Gene3D" id="1.10.455.10">
    <property type="entry name" value="Ribosomal protein S7 domain"/>
    <property type="match status" value="1"/>
</dbReference>
<dbReference type="HAMAP" id="MF_00480_B">
    <property type="entry name" value="Ribosomal_uS7_B"/>
    <property type="match status" value="1"/>
</dbReference>
<dbReference type="InterPro" id="IPR000235">
    <property type="entry name" value="Ribosomal_uS7"/>
</dbReference>
<dbReference type="InterPro" id="IPR005717">
    <property type="entry name" value="Ribosomal_uS7_bac/org-type"/>
</dbReference>
<dbReference type="InterPro" id="IPR023798">
    <property type="entry name" value="Ribosomal_uS7_dom"/>
</dbReference>
<dbReference type="InterPro" id="IPR036823">
    <property type="entry name" value="Ribosomal_uS7_dom_sf"/>
</dbReference>
<dbReference type="NCBIfam" id="TIGR01029">
    <property type="entry name" value="rpsG_bact"/>
    <property type="match status" value="1"/>
</dbReference>
<dbReference type="PANTHER" id="PTHR11205">
    <property type="entry name" value="RIBOSOMAL PROTEIN S7"/>
    <property type="match status" value="1"/>
</dbReference>
<dbReference type="Pfam" id="PF00177">
    <property type="entry name" value="Ribosomal_S7"/>
    <property type="match status" value="1"/>
</dbReference>
<dbReference type="PIRSF" id="PIRSF002122">
    <property type="entry name" value="RPS7p_RPS7a_RPS5e_RPS7o"/>
    <property type="match status" value="1"/>
</dbReference>
<dbReference type="SUPFAM" id="SSF47973">
    <property type="entry name" value="Ribosomal protein S7"/>
    <property type="match status" value="1"/>
</dbReference>
<name>RS7_GEOSM</name>
<reference key="1">
    <citation type="submission" date="2009-07" db="EMBL/GenBank/DDBJ databases">
        <title>Complete sequence of Geobacter sp. M21.</title>
        <authorList>
            <consortium name="US DOE Joint Genome Institute"/>
            <person name="Lucas S."/>
            <person name="Copeland A."/>
            <person name="Lapidus A."/>
            <person name="Glavina del Rio T."/>
            <person name="Dalin E."/>
            <person name="Tice H."/>
            <person name="Bruce D."/>
            <person name="Goodwin L."/>
            <person name="Pitluck S."/>
            <person name="Saunders E."/>
            <person name="Brettin T."/>
            <person name="Detter J.C."/>
            <person name="Han C."/>
            <person name="Larimer F."/>
            <person name="Land M."/>
            <person name="Hauser L."/>
            <person name="Kyrpides N."/>
            <person name="Ovchinnikova G."/>
            <person name="Lovley D."/>
        </authorList>
    </citation>
    <scope>NUCLEOTIDE SEQUENCE [LARGE SCALE GENOMIC DNA]</scope>
    <source>
        <strain>M21</strain>
    </source>
</reference>
<comment type="function">
    <text evidence="1">One of the primary rRNA binding proteins, it binds directly to 16S rRNA where it nucleates assembly of the head domain of the 30S subunit. Is located at the subunit interface close to the decoding center, probably blocks exit of the E-site tRNA.</text>
</comment>
<comment type="subunit">
    <text evidence="1">Part of the 30S ribosomal subunit. Contacts proteins S9 and S11.</text>
</comment>
<comment type="similarity">
    <text evidence="1">Belongs to the universal ribosomal protein uS7 family.</text>
</comment>
<feature type="chain" id="PRO_1000206405" description="Small ribosomal subunit protein uS7">
    <location>
        <begin position="1"/>
        <end position="156"/>
    </location>
</feature>
<protein>
    <recommendedName>
        <fullName evidence="1">Small ribosomal subunit protein uS7</fullName>
    </recommendedName>
    <alternativeName>
        <fullName evidence="2">30S ribosomal protein S7</fullName>
    </alternativeName>
</protein>
<accession>C6E4R1</accession>
<gene>
    <name evidence="1" type="primary">rpsG</name>
    <name type="ordered locus">GM21_3332</name>
</gene>
<evidence type="ECO:0000255" key="1">
    <source>
        <dbReference type="HAMAP-Rule" id="MF_00480"/>
    </source>
</evidence>
<evidence type="ECO:0000305" key="2"/>
<sequence length="156" mass="17710">MPRRREVAKRVILPDPKYADRVVAKLINIIMLDGKKSTAEKALYGAMEIAAGKAGEEPVKVLKKCLDNIKPMLEVKSRRVGGSTYQVPVEVRPERRVSLAMRWLVKYSNARSEKTVTDKLAGEILDAYNNRGSAVKKREDTHKMAEANRAFAHYRW</sequence>
<proteinExistence type="inferred from homology"/>
<organism>
    <name type="scientific">Geobacter sp. (strain M21)</name>
    <dbReference type="NCBI Taxonomy" id="443144"/>
    <lineage>
        <taxon>Bacteria</taxon>
        <taxon>Pseudomonadati</taxon>
        <taxon>Thermodesulfobacteriota</taxon>
        <taxon>Desulfuromonadia</taxon>
        <taxon>Geobacterales</taxon>
        <taxon>Geobacteraceae</taxon>
        <taxon>Geobacter</taxon>
    </lineage>
</organism>